<feature type="chain" id="PRO_1000080658" description="RNA-binding protein Hfq">
    <location>
        <begin position="1"/>
        <end position="78"/>
    </location>
</feature>
<feature type="domain" description="Sm" evidence="2">
    <location>
        <begin position="10"/>
        <end position="70"/>
    </location>
</feature>
<evidence type="ECO:0000255" key="1">
    <source>
        <dbReference type="HAMAP-Rule" id="MF_00436"/>
    </source>
</evidence>
<evidence type="ECO:0000255" key="2">
    <source>
        <dbReference type="PROSITE-ProRule" id="PRU01346"/>
    </source>
</evidence>
<comment type="function">
    <text evidence="1">RNA chaperone that binds small regulatory RNA (sRNAs) and mRNAs to facilitate mRNA translational regulation in response to envelope stress, environmental stress and changes in metabolite concentrations. Also binds with high specificity to tRNAs.</text>
</comment>
<comment type="subunit">
    <text evidence="1">Homohexamer.</text>
</comment>
<comment type="similarity">
    <text evidence="1">Belongs to the Hfq family.</text>
</comment>
<keyword id="KW-0694">RNA-binding</keyword>
<keyword id="KW-0346">Stress response</keyword>
<dbReference type="EMBL" id="CP000911">
    <property type="protein sequence ID" value="ABY38214.1"/>
    <property type="molecule type" value="Genomic_DNA"/>
</dbReference>
<dbReference type="RefSeq" id="WP_002964239.1">
    <property type="nucleotide sequence ID" value="NC_010169.1"/>
</dbReference>
<dbReference type="SMR" id="B0CGR3"/>
<dbReference type="GeneID" id="97533634"/>
<dbReference type="KEGG" id="bmt:BSUIS_A1160"/>
<dbReference type="HOGENOM" id="CLU_113688_0_0_5"/>
<dbReference type="PRO" id="PR:B0CGR3"/>
<dbReference type="Proteomes" id="UP000008545">
    <property type="component" value="Chromosome I"/>
</dbReference>
<dbReference type="GO" id="GO:0005829">
    <property type="term" value="C:cytosol"/>
    <property type="evidence" value="ECO:0007669"/>
    <property type="project" value="TreeGrafter"/>
</dbReference>
<dbReference type="GO" id="GO:0003723">
    <property type="term" value="F:RNA binding"/>
    <property type="evidence" value="ECO:0007669"/>
    <property type="project" value="UniProtKB-UniRule"/>
</dbReference>
<dbReference type="GO" id="GO:0006355">
    <property type="term" value="P:regulation of DNA-templated transcription"/>
    <property type="evidence" value="ECO:0007669"/>
    <property type="project" value="InterPro"/>
</dbReference>
<dbReference type="GO" id="GO:0043487">
    <property type="term" value="P:regulation of RNA stability"/>
    <property type="evidence" value="ECO:0007669"/>
    <property type="project" value="TreeGrafter"/>
</dbReference>
<dbReference type="GO" id="GO:0045974">
    <property type="term" value="P:regulation of translation, ncRNA-mediated"/>
    <property type="evidence" value="ECO:0007669"/>
    <property type="project" value="TreeGrafter"/>
</dbReference>
<dbReference type="CDD" id="cd01716">
    <property type="entry name" value="Hfq"/>
    <property type="match status" value="1"/>
</dbReference>
<dbReference type="Gene3D" id="2.30.30.100">
    <property type="match status" value="1"/>
</dbReference>
<dbReference type="HAMAP" id="MF_00436">
    <property type="entry name" value="Hfq"/>
    <property type="match status" value="1"/>
</dbReference>
<dbReference type="InterPro" id="IPR005001">
    <property type="entry name" value="Hfq"/>
</dbReference>
<dbReference type="InterPro" id="IPR010920">
    <property type="entry name" value="LSM_dom_sf"/>
</dbReference>
<dbReference type="InterPro" id="IPR047575">
    <property type="entry name" value="Sm"/>
</dbReference>
<dbReference type="NCBIfam" id="TIGR02383">
    <property type="entry name" value="Hfq"/>
    <property type="match status" value="1"/>
</dbReference>
<dbReference type="NCBIfam" id="NF001602">
    <property type="entry name" value="PRK00395.1"/>
    <property type="match status" value="1"/>
</dbReference>
<dbReference type="PANTHER" id="PTHR34772">
    <property type="entry name" value="RNA-BINDING PROTEIN HFQ"/>
    <property type="match status" value="1"/>
</dbReference>
<dbReference type="PANTHER" id="PTHR34772:SF1">
    <property type="entry name" value="RNA-BINDING PROTEIN HFQ"/>
    <property type="match status" value="1"/>
</dbReference>
<dbReference type="Pfam" id="PF17209">
    <property type="entry name" value="Hfq"/>
    <property type="match status" value="1"/>
</dbReference>
<dbReference type="SUPFAM" id="SSF50182">
    <property type="entry name" value="Sm-like ribonucleoproteins"/>
    <property type="match status" value="1"/>
</dbReference>
<dbReference type="PROSITE" id="PS52002">
    <property type="entry name" value="SM"/>
    <property type="match status" value="1"/>
</dbReference>
<organism>
    <name type="scientific">Brucella suis (strain ATCC 23445 / NCTC 10510)</name>
    <dbReference type="NCBI Taxonomy" id="470137"/>
    <lineage>
        <taxon>Bacteria</taxon>
        <taxon>Pseudomonadati</taxon>
        <taxon>Pseudomonadota</taxon>
        <taxon>Alphaproteobacteria</taxon>
        <taxon>Hyphomicrobiales</taxon>
        <taxon>Brucellaceae</taxon>
        <taxon>Brucella/Ochrobactrum group</taxon>
        <taxon>Brucella</taxon>
    </lineage>
</organism>
<gene>
    <name evidence="1" type="primary">hfq</name>
    <name type="ordered locus">BSUIS_A1160</name>
</gene>
<sequence length="78" mass="8854">MAERSQNLQDLFLNSVRKQKISLTIFLINGVKLTGIVTSFDNFCVLLRRDGHSQLVYKHAISTIMPSQPVQMFEGEEA</sequence>
<reference key="1">
    <citation type="submission" date="2007-12" db="EMBL/GenBank/DDBJ databases">
        <title>Brucella suis ATCC 23445 whole genome shotgun sequencing project.</title>
        <authorList>
            <person name="Setubal J.C."/>
            <person name="Bowns C."/>
            <person name="Boyle S."/>
            <person name="Crasta O.R."/>
            <person name="Czar M.J."/>
            <person name="Dharmanolla C."/>
            <person name="Gillespie J.J."/>
            <person name="Kenyon R.W."/>
            <person name="Lu J."/>
            <person name="Mane S."/>
            <person name="Mohapatra S."/>
            <person name="Nagrani S."/>
            <person name="Purkayastha A."/>
            <person name="Rajasimha H.K."/>
            <person name="Shallom J.M."/>
            <person name="Shallom S."/>
            <person name="Shukla M."/>
            <person name="Snyder E.E."/>
            <person name="Sobral B.W."/>
            <person name="Wattam A.R."/>
            <person name="Will R."/>
            <person name="Williams K."/>
            <person name="Yoo H."/>
            <person name="Bruce D."/>
            <person name="Detter C."/>
            <person name="Munk C."/>
            <person name="Brettin T.S."/>
        </authorList>
    </citation>
    <scope>NUCLEOTIDE SEQUENCE [LARGE SCALE GENOMIC DNA]</scope>
    <source>
        <strain>ATCC 23445 / NCTC 10510</strain>
    </source>
</reference>
<protein>
    <recommendedName>
        <fullName evidence="1">RNA-binding protein Hfq</fullName>
    </recommendedName>
</protein>
<accession>B0CGR3</accession>
<proteinExistence type="inferred from homology"/>
<name>HFQ_BRUSI</name>